<name>RK12_GUITH</name>
<gene>
    <name evidence="1" type="primary">rpl12</name>
</gene>
<evidence type="ECO:0000255" key="1">
    <source>
        <dbReference type="HAMAP-Rule" id="MF_00368"/>
    </source>
</evidence>
<evidence type="ECO:0000256" key="2">
    <source>
        <dbReference type="SAM" id="MobiDB-lite"/>
    </source>
</evidence>
<evidence type="ECO:0000305" key="3"/>
<feature type="chain" id="PRO_0000157619" description="Large ribosomal subunit protein bL12c">
    <location>
        <begin position="1"/>
        <end position="129"/>
    </location>
</feature>
<feature type="region of interest" description="Disordered" evidence="2">
    <location>
        <begin position="101"/>
        <end position="129"/>
    </location>
</feature>
<feature type="compositionally biased region" description="Basic and acidic residues" evidence="2">
    <location>
        <begin position="101"/>
        <end position="123"/>
    </location>
</feature>
<keyword id="KW-0150">Chloroplast</keyword>
<keyword id="KW-0934">Plastid</keyword>
<keyword id="KW-0687">Ribonucleoprotein</keyword>
<keyword id="KW-0689">Ribosomal protein</keyword>
<reference key="1">
    <citation type="journal article" date="1999" name="J. Mol. Evol.">
        <title>The plastid genome of the cryptophyte alga, Guillardia theta: complete sequence and conserved synteny groups confirm its common ancestry with red algae.</title>
        <authorList>
            <person name="Douglas S.E."/>
            <person name="Penny S.L."/>
        </authorList>
    </citation>
    <scope>NUCLEOTIDE SEQUENCE [LARGE SCALE GENOMIC DNA]</scope>
</reference>
<comment type="function">
    <text evidence="1">Forms part of the ribosomal stalk which helps the ribosome interact with GTP-bound translation factors. Is thus essential for accurate translation.</text>
</comment>
<comment type="subunit">
    <text evidence="1">Homodimer. Part of the ribosomal stalk of the 50S ribosomal subunit. Forms a multimeric L10(L12)X complex, where L10 forms an elongated spine to which 2 to 4 L12 dimers bind in a sequential fashion. Binds GTP-bound translation factors.</text>
</comment>
<comment type="subcellular location">
    <subcellularLocation>
        <location>Plastid</location>
        <location>Chloroplast</location>
    </subcellularLocation>
</comment>
<comment type="similarity">
    <text evidence="1">Belongs to the bacterial ribosomal protein bL12 family.</text>
</comment>
<proteinExistence type="inferred from homology"/>
<organism>
    <name type="scientific">Guillardia theta</name>
    <name type="common">Cryptophyte</name>
    <name type="synonym">Cryptomonas phi</name>
    <dbReference type="NCBI Taxonomy" id="55529"/>
    <lineage>
        <taxon>Eukaryota</taxon>
        <taxon>Cryptophyceae</taxon>
        <taxon>Pyrenomonadales</taxon>
        <taxon>Geminigeraceae</taxon>
        <taxon>Guillardia</taxon>
    </lineage>
</organism>
<sequence>MNKVQNIIDQLKDLTLLEAADLVKQIEETFNVSATAAAAPINMVAATAGAGSAEAVEEKTEFDLILEDVPADKKIAVLKVVRGLTGLGLKEAKDLVEAAPKPIKEGMSKADAEAGKKQLEEAGAKATLK</sequence>
<protein>
    <recommendedName>
        <fullName evidence="1">Large ribosomal subunit protein bL12c</fullName>
    </recommendedName>
    <alternativeName>
        <fullName evidence="3">50S ribosomal protein L12, chloroplastic</fullName>
    </alternativeName>
</protein>
<accession>O78414</accession>
<geneLocation type="chloroplast"/>
<dbReference type="EMBL" id="AF041468">
    <property type="protein sequence ID" value="AAC35599.1"/>
    <property type="molecule type" value="Genomic_DNA"/>
</dbReference>
<dbReference type="RefSeq" id="NP_050665.1">
    <property type="nucleotide sequence ID" value="NC_000926.1"/>
</dbReference>
<dbReference type="SMR" id="O78414"/>
<dbReference type="GeneID" id="856951"/>
<dbReference type="HOGENOM" id="CLU_086499_3_0_1"/>
<dbReference type="OMA" id="FFPIHGR"/>
<dbReference type="GO" id="GO:0009507">
    <property type="term" value="C:chloroplast"/>
    <property type="evidence" value="ECO:0007669"/>
    <property type="project" value="UniProtKB-SubCell"/>
</dbReference>
<dbReference type="GO" id="GO:0022625">
    <property type="term" value="C:cytosolic large ribosomal subunit"/>
    <property type="evidence" value="ECO:0007669"/>
    <property type="project" value="TreeGrafter"/>
</dbReference>
<dbReference type="GO" id="GO:0003729">
    <property type="term" value="F:mRNA binding"/>
    <property type="evidence" value="ECO:0007669"/>
    <property type="project" value="TreeGrafter"/>
</dbReference>
<dbReference type="GO" id="GO:0003735">
    <property type="term" value="F:structural constituent of ribosome"/>
    <property type="evidence" value="ECO:0007669"/>
    <property type="project" value="InterPro"/>
</dbReference>
<dbReference type="GO" id="GO:0006412">
    <property type="term" value="P:translation"/>
    <property type="evidence" value="ECO:0007669"/>
    <property type="project" value="UniProtKB-UniRule"/>
</dbReference>
<dbReference type="CDD" id="cd00387">
    <property type="entry name" value="Ribosomal_L7_L12"/>
    <property type="match status" value="1"/>
</dbReference>
<dbReference type="FunFam" id="3.30.1390.10:FF:000001">
    <property type="entry name" value="50S ribosomal protein L7/L12"/>
    <property type="match status" value="1"/>
</dbReference>
<dbReference type="Gene3D" id="3.30.1390.10">
    <property type="match status" value="1"/>
</dbReference>
<dbReference type="Gene3D" id="1.20.5.710">
    <property type="entry name" value="Single helix bin"/>
    <property type="match status" value="1"/>
</dbReference>
<dbReference type="HAMAP" id="MF_00368">
    <property type="entry name" value="Ribosomal_bL12"/>
    <property type="match status" value="1"/>
</dbReference>
<dbReference type="InterPro" id="IPR000206">
    <property type="entry name" value="Ribosomal_bL12"/>
</dbReference>
<dbReference type="InterPro" id="IPR013823">
    <property type="entry name" value="Ribosomal_bL12_C"/>
</dbReference>
<dbReference type="InterPro" id="IPR014719">
    <property type="entry name" value="Ribosomal_bL12_C/ClpS-like"/>
</dbReference>
<dbReference type="InterPro" id="IPR008932">
    <property type="entry name" value="Ribosomal_bL12_oligo"/>
</dbReference>
<dbReference type="InterPro" id="IPR036235">
    <property type="entry name" value="Ribosomal_bL12_oligo_N_sf"/>
</dbReference>
<dbReference type="NCBIfam" id="TIGR00855">
    <property type="entry name" value="L12"/>
    <property type="match status" value="1"/>
</dbReference>
<dbReference type="PANTHER" id="PTHR45987">
    <property type="entry name" value="39S RIBOSOMAL PROTEIN L12"/>
    <property type="match status" value="1"/>
</dbReference>
<dbReference type="PANTHER" id="PTHR45987:SF4">
    <property type="entry name" value="LARGE RIBOSOMAL SUBUNIT PROTEIN BL12M"/>
    <property type="match status" value="1"/>
</dbReference>
<dbReference type="Pfam" id="PF00542">
    <property type="entry name" value="Ribosomal_L12"/>
    <property type="match status" value="1"/>
</dbReference>
<dbReference type="Pfam" id="PF16320">
    <property type="entry name" value="Ribosomal_L12_N"/>
    <property type="match status" value="1"/>
</dbReference>
<dbReference type="SUPFAM" id="SSF54736">
    <property type="entry name" value="ClpS-like"/>
    <property type="match status" value="1"/>
</dbReference>
<dbReference type="SUPFAM" id="SSF48300">
    <property type="entry name" value="Ribosomal protein L7/12, oligomerisation (N-terminal) domain"/>
    <property type="match status" value="1"/>
</dbReference>